<dbReference type="EMBL" id="AL009126">
    <property type="protein sequence ID" value="CAB13762.1"/>
    <property type="molecule type" value="Genomic_DNA"/>
</dbReference>
<dbReference type="PIR" id="B69897">
    <property type="entry name" value="B69897"/>
</dbReference>
<dbReference type="RefSeq" id="NP_389751.1">
    <property type="nucleotide sequence ID" value="NC_000964.3"/>
</dbReference>
<dbReference type="RefSeq" id="WP_009967392.1">
    <property type="nucleotide sequence ID" value="NZ_OZ025638.1"/>
</dbReference>
<dbReference type="FunCoup" id="O31831">
    <property type="interactions" value="32"/>
</dbReference>
<dbReference type="PaxDb" id="224308-BSU18700"/>
<dbReference type="EnsemblBacteria" id="CAB13762">
    <property type="protein sequence ID" value="CAB13762"/>
    <property type="gene ID" value="BSU_18700"/>
</dbReference>
<dbReference type="GeneID" id="940010"/>
<dbReference type="KEGG" id="bsu:BSU18700"/>
<dbReference type="PATRIC" id="fig|224308.43.peg.1981"/>
<dbReference type="eggNOG" id="ENOG5032XJY">
    <property type="taxonomic scope" value="Bacteria"/>
</dbReference>
<dbReference type="InParanoid" id="O31831"/>
<dbReference type="OrthoDB" id="1456570at2"/>
<dbReference type="BioCyc" id="BSUB:BSU18700-MONOMER"/>
<dbReference type="Proteomes" id="UP000001570">
    <property type="component" value="Chromosome"/>
</dbReference>
<gene>
    <name type="primary">yoaQ</name>
    <name type="ordered locus">BSU18700</name>
</gene>
<reference key="1">
    <citation type="journal article" date="1997" name="Nature">
        <title>The complete genome sequence of the Gram-positive bacterium Bacillus subtilis.</title>
        <authorList>
            <person name="Kunst F."/>
            <person name="Ogasawara N."/>
            <person name="Moszer I."/>
            <person name="Albertini A.M."/>
            <person name="Alloni G."/>
            <person name="Azevedo V."/>
            <person name="Bertero M.G."/>
            <person name="Bessieres P."/>
            <person name="Bolotin A."/>
            <person name="Borchert S."/>
            <person name="Borriss R."/>
            <person name="Boursier L."/>
            <person name="Brans A."/>
            <person name="Braun M."/>
            <person name="Brignell S.C."/>
            <person name="Bron S."/>
            <person name="Brouillet S."/>
            <person name="Bruschi C.V."/>
            <person name="Caldwell B."/>
            <person name="Capuano V."/>
            <person name="Carter N.M."/>
            <person name="Choi S.-K."/>
            <person name="Codani J.-J."/>
            <person name="Connerton I.F."/>
            <person name="Cummings N.J."/>
            <person name="Daniel R.A."/>
            <person name="Denizot F."/>
            <person name="Devine K.M."/>
            <person name="Duesterhoeft A."/>
            <person name="Ehrlich S.D."/>
            <person name="Emmerson P.T."/>
            <person name="Entian K.-D."/>
            <person name="Errington J."/>
            <person name="Fabret C."/>
            <person name="Ferrari E."/>
            <person name="Foulger D."/>
            <person name="Fritz C."/>
            <person name="Fujita M."/>
            <person name="Fujita Y."/>
            <person name="Fuma S."/>
            <person name="Galizzi A."/>
            <person name="Galleron N."/>
            <person name="Ghim S.-Y."/>
            <person name="Glaser P."/>
            <person name="Goffeau A."/>
            <person name="Golightly E.J."/>
            <person name="Grandi G."/>
            <person name="Guiseppi G."/>
            <person name="Guy B.J."/>
            <person name="Haga K."/>
            <person name="Haiech J."/>
            <person name="Harwood C.R."/>
            <person name="Henaut A."/>
            <person name="Hilbert H."/>
            <person name="Holsappel S."/>
            <person name="Hosono S."/>
            <person name="Hullo M.-F."/>
            <person name="Itaya M."/>
            <person name="Jones L.-M."/>
            <person name="Joris B."/>
            <person name="Karamata D."/>
            <person name="Kasahara Y."/>
            <person name="Klaerr-Blanchard M."/>
            <person name="Klein C."/>
            <person name="Kobayashi Y."/>
            <person name="Koetter P."/>
            <person name="Koningstein G."/>
            <person name="Krogh S."/>
            <person name="Kumano M."/>
            <person name="Kurita K."/>
            <person name="Lapidus A."/>
            <person name="Lardinois S."/>
            <person name="Lauber J."/>
            <person name="Lazarevic V."/>
            <person name="Lee S.-M."/>
            <person name="Levine A."/>
            <person name="Liu H."/>
            <person name="Masuda S."/>
            <person name="Mauel C."/>
            <person name="Medigue C."/>
            <person name="Medina N."/>
            <person name="Mellado R.P."/>
            <person name="Mizuno M."/>
            <person name="Moestl D."/>
            <person name="Nakai S."/>
            <person name="Noback M."/>
            <person name="Noone D."/>
            <person name="O'Reilly M."/>
            <person name="Ogawa K."/>
            <person name="Ogiwara A."/>
            <person name="Oudega B."/>
            <person name="Park S.-H."/>
            <person name="Parro V."/>
            <person name="Pohl T.M."/>
            <person name="Portetelle D."/>
            <person name="Porwollik S."/>
            <person name="Prescott A.M."/>
            <person name="Presecan E."/>
            <person name="Pujic P."/>
            <person name="Purnelle B."/>
            <person name="Rapoport G."/>
            <person name="Rey M."/>
            <person name="Reynolds S."/>
            <person name="Rieger M."/>
            <person name="Rivolta C."/>
            <person name="Rocha E."/>
            <person name="Roche B."/>
            <person name="Rose M."/>
            <person name="Sadaie Y."/>
            <person name="Sato T."/>
            <person name="Scanlan E."/>
            <person name="Schleich S."/>
            <person name="Schroeter R."/>
            <person name="Scoffone F."/>
            <person name="Sekiguchi J."/>
            <person name="Sekowska A."/>
            <person name="Seror S.J."/>
            <person name="Serror P."/>
            <person name="Shin B.-S."/>
            <person name="Soldo B."/>
            <person name="Sorokin A."/>
            <person name="Tacconi E."/>
            <person name="Takagi T."/>
            <person name="Takahashi H."/>
            <person name="Takemaru K."/>
            <person name="Takeuchi M."/>
            <person name="Tamakoshi A."/>
            <person name="Tanaka T."/>
            <person name="Terpstra P."/>
            <person name="Tognoni A."/>
            <person name="Tosato V."/>
            <person name="Uchiyama S."/>
            <person name="Vandenbol M."/>
            <person name="Vannier F."/>
            <person name="Vassarotti A."/>
            <person name="Viari A."/>
            <person name="Wambutt R."/>
            <person name="Wedler E."/>
            <person name="Wedler H."/>
            <person name="Weitzenegger T."/>
            <person name="Winters P."/>
            <person name="Wipat A."/>
            <person name="Yamamoto H."/>
            <person name="Yamane K."/>
            <person name="Yasumoto K."/>
            <person name="Yata K."/>
            <person name="Yoshida K."/>
            <person name="Yoshikawa H.-F."/>
            <person name="Zumstein E."/>
            <person name="Yoshikawa H."/>
            <person name="Danchin A."/>
        </authorList>
    </citation>
    <scope>NUCLEOTIDE SEQUENCE [LARGE SCALE GENOMIC DNA]</scope>
    <source>
        <strain>168</strain>
    </source>
</reference>
<organism>
    <name type="scientific">Bacillus subtilis (strain 168)</name>
    <dbReference type="NCBI Taxonomy" id="224308"/>
    <lineage>
        <taxon>Bacteria</taxon>
        <taxon>Bacillati</taxon>
        <taxon>Bacillota</taxon>
        <taxon>Bacilli</taxon>
        <taxon>Bacillales</taxon>
        <taxon>Bacillaceae</taxon>
        <taxon>Bacillus</taxon>
    </lineage>
</organism>
<protein>
    <recommendedName>
        <fullName>Uncharacterized protein YoaQ</fullName>
    </recommendedName>
</protein>
<feature type="chain" id="PRO_0000359908" description="Uncharacterized protein YoaQ">
    <location>
        <begin position="1"/>
        <end position="118"/>
    </location>
</feature>
<proteinExistence type="predicted"/>
<keyword id="KW-1185">Reference proteome</keyword>
<sequence length="118" mass="13663">MVEKCYSCLICGYKGLIQNPLYKGEYQKTFDICPCCGFEFGYSEDHDVRLGFIVTPDHLIEAAFQLYRKQWLESGMVIAHPEDIPEELKNGNCLKFEVLLKQLKKLNLDIENFEISGF</sequence>
<accession>O31831</accession>
<name>YOAQ_BACSU</name>